<name>VDAC1_RAT</name>
<protein>
    <recommendedName>
        <fullName evidence="11">Non-selective voltage-gated ion channel VDAC1</fullName>
    </recommendedName>
    <alternativeName>
        <fullName>Outer mitochondrial membrane protein porin 1</fullName>
    </alternativeName>
    <alternativeName>
        <fullName>Voltage-dependent anion-selective channel protein 1</fullName>
        <shortName>VDAC-1</shortName>
        <shortName>rVDAC1</shortName>
    </alternativeName>
</protein>
<sequence>MAVPPTYADLGKSARDVFTKGYGFGLIKLDLKTKSENGLEFTSSGSANTETTKVNGSLETKYRWTEYGLTFTEKWNTDNTLGTEITVEDQLARGLKLTFDSSFSPNTGKKNAKIKTGYKREHINLGCDVDFDIAGPSIRGALVLGYEGWLAGYQMNFETSKSRVTQSNFAVGYKTDEFQLHTNVNDGTEFGGSIYQKVNKKLETAVNLAWTAGNSNTRFGIAAKYQVDPDACFSAKVNNSSLIGLGYTQTLKPGIKLTLSALLDGKNVNAGGHKLGLGLEFQA</sequence>
<evidence type="ECO:0000250" key="1">
    <source>
        <dbReference type="UniProtKB" id="A0A6P7EFR0"/>
    </source>
</evidence>
<evidence type="ECO:0000250" key="2">
    <source>
        <dbReference type="UniProtKB" id="P21796"/>
    </source>
</evidence>
<evidence type="ECO:0000250" key="3">
    <source>
        <dbReference type="UniProtKB" id="P45880"/>
    </source>
</evidence>
<evidence type="ECO:0000250" key="4">
    <source>
        <dbReference type="UniProtKB" id="Q60932"/>
    </source>
</evidence>
<evidence type="ECO:0000269" key="5">
    <source>
    </source>
</evidence>
<evidence type="ECO:0000269" key="6">
    <source>
    </source>
</evidence>
<evidence type="ECO:0000269" key="7">
    <source>
    </source>
</evidence>
<evidence type="ECO:0000269" key="8">
    <source>
    </source>
</evidence>
<evidence type="ECO:0000269" key="9">
    <source>
    </source>
</evidence>
<evidence type="ECO:0000269" key="10">
    <source>
    </source>
</evidence>
<evidence type="ECO:0000305" key="11"/>
<evidence type="ECO:0000305" key="12">
    <source>
    </source>
</evidence>
<evidence type="ECO:0000312" key="13">
    <source>
        <dbReference type="RGD" id="621575"/>
    </source>
</evidence>
<evidence type="ECO:0007744" key="14">
    <source>
    </source>
</evidence>
<dbReference type="EMBL" id="AF048828">
    <property type="protein sequence ID" value="AAD02476.1"/>
    <property type="molecule type" value="mRNA"/>
</dbReference>
<dbReference type="EMBL" id="AB039662">
    <property type="protein sequence ID" value="BAB13473.1"/>
    <property type="molecule type" value="mRNA"/>
</dbReference>
<dbReference type="EMBL" id="AF268467">
    <property type="protein sequence ID" value="AAF80115.1"/>
    <property type="molecule type" value="mRNA"/>
</dbReference>
<dbReference type="EMBL" id="BC060558">
    <property type="protein sequence ID" value="AAH60558.1"/>
    <property type="status" value="ALT_INIT"/>
    <property type="molecule type" value="mRNA"/>
</dbReference>
<dbReference type="EMBL" id="BC072484">
    <property type="protein sequence ID" value="AAH72484.2"/>
    <property type="molecule type" value="mRNA"/>
</dbReference>
<dbReference type="EMBL" id="BC087573">
    <property type="protein sequence ID" value="AAH87573.2"/>
    <property type="molecule type" value="mRNA"/>
</dbReference>
<dbReference type="EMBL" id="BC087657">
    <property type="protein sequence ID" value="AAH87657.2"/>
    <property type="molecule type" value="mRNA"/>
</dbReference>
<dbReference type="EMBL" id="BC104684">
    <property type="protein sequence ID" value="AAI04685.2"/>
    <property type="molecule type" value="mRNA"/>
</dbReference>
<dbReference type="EMBL" id="BC127491">
    <property type="protein sequence ID" value="AAI27492.1"/>
    <property type="molecule type" value="mRNA"/>
</dbReference>
<dbReference type="RefSeq" id="NP_112643.1">
    <property type="nucleotide sequence ID" value="NM_031353.3"/>
</dbReference>
<dbReference type="SMR" id="Q9Z2L0"/>
<dbReference type="BioGRID" id="249746">
    <property type="interactions" value="11"/>
</dbReference>
<dbReference type="CORUM" id="Q9Z2L0"/>
<dbReference type="DIP" id="DIP-37068N"/>
<dbReference type="FunCoup" id="Q9Z2L0">
    <property type="interactions" value="3078"/>
</dbReference>
<dbReference type="IntAct" id="Q9Z2L0">
    <property type="interactions" value="10"/>
</dbReference>
<dbReference type="MINT" id="Q9Z2L0"/>
<dbReference type="STRING" id="10116.ENSRNOP00000008477"/>
<dbReference type="CarbonylDB" id="Q9Z2L0"/>
<dbReference type="GlyGen" id="Q9Z2L0">
    <property type="glycosylation" value="3 sites, 1 O-linked glycan (3 sites)"/>
</dbReference>
<dbReference type="iPTMnet" id="Q9Z2L0"/>
<dbReference type="PhosphoSitePlus" id="Q9Z2L0"/>
<dbReference type="SwissPalm" id="Q9Z2L0"/>
<dbReference type="jPOST" id="Q9Z2L0"/>
<dbReference type="PaxDb" id="10116-ENSRNOP00000008477"/>
<dbReference type="ABCD" id="Q9Z2L0">
    <property type="antibodies" value="1 sequenced antibody"/>
</dbReference>
<dbReference type="Ensembl" id="ENSRNOT00000008477.6">
    <property type="protein sequence ID" value="ENSRNOP00000008477.4"/>
    <property type="gene ID" value="ENSRNOG00000006375.7"/>
</dbReference>
<dbReference type="GeneID" id="83529"/>
<dbReference type="KEGG" id="rno:83529"/>
<dbReference type="UCSC" id="RGD:621575">
    <property type="organism name" value="rat"/>
</dbReference>
<dbReference type="AGR" id="RGD:621575"/>
<dbReference type="CTD" id="7416"/>
<dbReference type="RGD" id="621575">
    <property type="gene designation" value="Vdac1"/>
</dbReference>
<dbReference type="eggNOG" id="KOG3126">
    <property type="taxonomic scope" value="Eukaryota"/>
</dbReference>
<dbReference type="GeneTree" id="ENSGT00950000182869"/>
<dbReference type="HOGENOM" id="CLU_044399_2_0_1"/>
<dbReference type="InParanoid" id="Q9Z2L0"/>
<dbReference type="OrthoDB" id="5546at9989"/>
<dbReference type="PhylomeDB" id="Q9Z2L0"/>
<dbReference type="TreeFam" id="TF315091"/>
<dbReference type="Reactome" id="R-RNO-5205685">
    <property type="pathway name" value="PINK1-PRKN Mediated Mitophagy"/>
</dbReference>
<dbReference type="Reactome" id="R-RNO-5689880">
    <property type="pathway name" value="Ub-specific processing proteases"/>
</dbReference>
<dbReference type="Reactome" id="R-RNO-70268">
    <property type="pathway name" value="Pyruvate metabolism"/>
</dbReference>
<dbReference type="PRO" id="PR:Q9Z2L0"/>
<dbReference type="Proteomes" id="UP000002494">
    <property type="component" value="Chromosome 10"/>
</dbReference>
<dbReference type="Bgee" id="ENSRNOG00000006375">
    <property type="expression patterns" value="Expressed in skeletal muscle tissue and 19 other cell types or tissues"/>
</dbReference>
<dbReference type="GO" id="GO:0016020">
    <property type="term" value="C:membrane"/>
    <property type="evidence" value="ECO:0000250"/>
    <property type="project" value="UniProtKB"/>
</dbReference>
<dbReference type="GO" id="GO:0045121">
    <property type="term" value="C:membrane raft"/>
    <property type="evidence" value="ECO:0007669"/>
    <property type="project" value="UniProtKB-SubCell"/>
</dbReference>
<dbReference type="GO" id="GO:0031966">
    <property type="term" value="C:mitochondrial membrane"/>
    <property type="evidence" value="ECO:0000266"/>
    <property type="project" value="RGD"/>
</dbReference>
<dbReference type="GO" id="GO:0042645">
    <property type="term" value="C:mitochondrial nucleoid"/>
    <property type="evidence" value="ECO:0000266"/>
    <property type="project" value="RGD"/>
</dbReference>
<dbReference type="GO" id="GO:0005741">
    <property type="term" value="C:mitochondrial outer membrane"/>
    <property type="evidence" value="ECO:0000314"/>
    <property type="project" value="UniProtKB"/>
</dbReference>
<dbReference type="GO" id="GO:0005757">
    <property type="term" value="C:mitochondrial permeability transition pore complex"/>
    <property type="evidence" value="ECO:0000250"/>
    <property type="project" value="UniProtKB"/>
</dbReference>
<dbReference type="GO" id="GO:0005739">
    <property type="term" value="C:mitochondrion"/>
    <property type="evidence" value="ECO:0000266"/>
    <property type="project" value="RGD"/>
</dbReference>
<dbReference type="GO" id="GO:0005886">
    <property type="term" value="C:plasma membrane"/>
    <property type="evidence" value="ECO:0000250"/>
    <property type="project" value="UniProtKB"/>
</dbReference>
<dbReference type="GO" id="GO:0098839">
    <property type="term" value="C:postsynaptic density membrane"/>
    <property type="evidence" value="ECO:0000314"/>
    <property type="project" value="SynGO"/>
</dbReference>
<dbReference type="GO" id="GO:0048787">
    <property type="term" value="C:presynaptic active zone membrane"/>
    <property type="evidence" value="ECO:0000314"/>
    <property type="project" value="SynGO"/>
</dbReference>
<dbReference type="GO" id="GO:0032991">
    <property type="term" value="C:protein-containing complex"/>
    <property type="evidence" value="ECO:0000314"/>
    <property type="project" value="RGD"/>
</dbReference>
<dbReference type="GO" id="GO:0008021">
    <property type="term" value="C:synaptic vesicle"/>
    <property type="evidence" value="ECO:0000314"/>
    <property type="project" value="RGD"/>
</dbReference>
<dbReference type="GO" id="GO:0005524">
    <property type="term" value="F:ATP binding"/>
    <property type="evidence" value="ECO:0007669"/>
    <property type="project" value="UniProtKB-KW"/>
</dbReference>
<dbReference type="GO" id="GO:0005262">
    <property type="term" value="F:calcium channel activity"/>
    <property type="evidence" value="ECO:0000304"/>
    <property type="project" value="Reactome"/>
</dbReference>
<dbReference type="GO" id="GO:0097001">
    <property type="term" value="F:ceramide binding"/>
    <property type="evidence" value="ECO:0000266"/>
    <property type="project" value="RGD"/>
</dbReference>
<dbReference type="GO" id="GO:0015485">
    <property type="term" value="F:cholesterol binding"/>
    <property type="evidence" value="ECO:0000266"/>
    <property type="project" value="RGD"/>
</dbReference>
<dbReference type="GO" id="GO:0042802">
    <property type="term" value="F:identical protein binding"/>
    <property type="evidence" value="ECO:0000266"/>
    <property type="project" value="RGD"/>
</dbReference>
<dbReference type="GO" id="GO:0005253">
    <property type="term" value="F:monoatomic anion channel activity"/>
    <property type="evidence" value="ECO:0000314"/>
    <property type="project" value="RGD"/>
</dbReference>
<dbReference type="GO" id="GO:0008142">
    <property type="term" value="F:oxysterol binding"/>
    <property type="evidence" value="ECO:0000250"/>
    <property type="project" value="UniProtKB"/>
</dbReference>
<dbReference type="GO" id="GO:0031210">
    <property type="term" value="F:phosphatidylcholine binding"/>
    <property type="evidence" value="ECO:0000266"/>
    <property type="project" value="RGD"/>
</dbReference>
<dbReference type="GO" id="GO:0015288">
    <property type="term" value="F:porin activity"/>
    <property type="evidence" value="ECO:0007669"/>
    <property type="project" value="UniProtKB-KW"/>
</dbReference>
<dbReference type="GO" id="GO:0019901">
    <property type="term" value="F:protein kinase binding"/>
    <property type="evidence" value="ECO:0000266"/>
    <property type="project" value="RGD"/>
</dbReference>
<dbReference type="GO" id="GO:0044877">
    <property type="term" value="F:protein-containing complex binding"/>
    <property type="evidence" value="ECO:0000314"/>
    <property type="project" value="RGD"/>
</dbReference>
<dbReference type="GO" id="GO:0044325">
    <property type="term" value="F:transmembrane transporter binding"/>
    <property type="evidence" value="ECO:0000266"/>
    <property type="project" value="RGD"/>
</dbReference>
<dbReference type="GO" id="GO:0022832">
    <property type="term" value="F:voltage-gated channel activity"/>
    <property type="evidence" value="ECO:0000314"/>
    <property type="project" value="UniProtKB"/>
</dbReference>
<dbReference type="GO" id="GO:0008308">
    <property type="term" value="F:voltage-gated monoatomic anion channel activity"/>
    <property type="evidence" value="ECO:0000314"/>
    <property type="project" value="RGD"/>
</dbReference>
<dbReference type="GO" id="GO:0005244">
    <property type="term" value="F:voltage-gated monoatomic ion channel activity"/>
    <property type="evidence" value="ECO:0000250"/>
    <property type="project" value="UniProtKB"/>
</dbReference>
<dbReference type="GO" id="GO:0006915">
    <property type="term" value="P:apoptotic process"/>
    <property type="evidence" value="ECO:0000250"/>
    <property type="project" value="UniProtKB"/>
</dbReference>
<dbReference type="GO" id="GO:0001662">
    <property type="term" value="P:behavioral fear response"/>
    <property type="evidence" value="ECO:0000266"/>
    <property type="project" value="RGD"/>
</dbReference>
<dbReference type="GO" id="GO:0036444">
    <property type="term" value="P:calcium import into the mitochondrion"/>
    <property type="evidence" value="ECO:0000315"/>
    <property type="project" value="UniProtKB"/>
</dbReference>
<dbReference type="GO" id="GO:0007268">
    <property type="term" value="P:chemical synaptic transmission"/>
    <property type="evidence" value="ECO:0000266"/>
    <property type="project" value="RGD"/>
</dbReference>
<dbReference type="GO" id="GO:0030855">
    <property type="term" value="P:epithelial cell differentiation"/>
    <property type="evidence" value="ECO:0000266"/>
    <property type="project" value="RGD"/>
</dbReference>
<dbReference type="GO" id="GO:0007612">
    <property type="term" value="P:learning"/>
    <property type="evidence" value="ECO:0000266"/>
    <property type="project" value="RGD"/>
</dbReference>
<dbReference type="GO" id="GO:0006869">
    <property type="term" value="P:lipid transport"/>
    <property type="evidence" value="ECO:0007669"/>
    <property type="project" value="UniProtKB-KW"/>
</dbReference>
<dbReference type="GO" id="GO:0006851">
    <property type="term" value="P:mitochondrial calcium ion transmembrane transport"/>
    <property type="evidence" value="ECO:0000314"/>
    <property type="project" value="RGD"/>
</dbReference>
<dbReference type="GO" id="GO:1990542">
    <property type="term" value="P:mitochondrial transmembrane transport"/>
    <property type="evidence" value="ECO:0000266"/>
    <property type="project" value="RGD"/>
</dbReference>
<dbReference type="GO" id="GO:0006820">
    <property type="term" value="P:monoatomic anion transport"/>
    <property type="evidence" value="ECO:0000266"/>
    <property type="project" value="RGD"/>
</dbReference>
<dbReference type="GO" id="GO:0043066">
    <property type="term" value="P:negative regulation of apoptotic process"/>
    <property type="evidence" value="ECO:0000266"/>
    <property type="project" value="RGD"/>
</dbReference>
<dbReference type="GO" id="GO:0110099">
    <property type="term" value="P:negative regulation of calcium import into the mitochondrion"/>
    <property type="evidence" value="ECO:0000266"/>
    <property type="project" value="RGD"/>
</dbReference>
<dbReference type="GO" id="GO:2000378">
    <property type="term" value="P:negative regulation of reactive oxygen species metabolic process"/>
    <property type="evidence" value="ECO:0000266"/>
    <property type="project" value="RGD"/>
</dbReference>
<dbReference type="GO" id="GO:0007270">
    <property type="term" value="P:neuron-neuron synaptic transmission"/>
    <property type="evidence" value="ECO:0000266"/>
    <property type="project" value="RGD"/>
</dbReference>
<dbReference type="GO" id="GO:0043065">
    <property type="term" value="P:positive regulation of apoptotic process"/>
    <property type="evidence" value="ECO:0000266"/>
    <property type="project" value="RGD"/>
</dbReference>
<dbReference type="GO" id="GO:1905091">
    <property type="term" value="P:positive regulation of type 2 mitophagy"/>
    <property type="evidence" value="ECO:0000266"/>
    <property type="project" value="RGD"/>
</dbReference>
<dbReference type="GO" id="GO:1901524">
    <property type="term" value="P:regulation of mitophagy"/>
    <property type="evidence" value="ECO:0000266"/>
    <property type="project" value="RGD"/>
</dbReference>
<dbReference type="CDD" id="cd07306">
    <property type="entry name" value="Porin3_VDAC"/>
    <property type="match status" value="1"/>
</dbReference>
<dbReference type="FunFam" id="2.40.160.10:FF:000001">
    <property type="entry name" value="Voltage-dependent anion-selective channel protein 2"/>
    <property type="match status" value="1"/>
</dbReference>
<dbReference type="Gene3D" id="2.40.160.10">
    <property type="entry name" value="Porin"/>
    <property type="match status" value="1"/>
</dbReference>
<dbReference type="InterPro" id="IPR023614">
    <property type="entry name" value="Porin_dom_sf"/>
</dbReference>
<dbReference type="InterPro" id="IPR001925">
    <property type="entry name" value="Porin_Euk"/>
</dbReference>
<dbReference type="InterPro" id="IPR027246">
    <property type="entry name" value="Porin_Euk/Tom40"/>
</dbReference>
<dbReference type="PANTHER" id="PTHR11743">
    <property type="entry name" value="VOLTAGE-DEPENDENT ANION-SELECTIVE CHANNEL"/>
    <property type="match status" value="1"/>
</dbReference>
<dbReference type="PANTHER" id="PTHR11743:SF13">
    <property type="entry name" value="VOLTAGE-DEPENDENT ANION-SELECTIVE CHANNEL PROTEIN 1"/>
    <property type="match status" value="1"/>
</dbReference>
<dbReference type="Pfam" id="PF01459">
    <property type="entry name" value="Porin_3"/>
    <property type="match status" value="1"/>
</dbReference>
<dbReference type="PRINTS" id="PR00185">
    <property type="entry name" value="EUKARYTPORIN"/>
</dbReference>
<dbReference type="PROSITE" id="PS00558">
    <property type="entry name" value="EUKARYOTIC_PORIN"/>
    <property type="match status" value="1"/>
</dbReference>
<reference key="1">
    <citation type="journal article" date="1998" name="Biochim. Biophys. Acta">
        <title>Characterization of rat porin isoforms: cloning of a cardiac type-3 variant encoding an additional methionine at its putative N-terminal region.</title>
        <authorList>
            <person name="Anflous K."/>
            <person name="Blondel O."/>
            <person name="Bernard A."/>
            <person name="Khrestchatisky M."/>
            <person name="Ventura-Clapier R."/>
        </authorList>
    </citation>
    <scope>NUCLEOTIDE SEQUENCE [MRNA]</scope>
    <source>
        <tissue>Heart</tissue>
    </source>
</reference>
<reference key="2">
    <citation type="journal article" date="2000" name="Eur. J. Biochem.">
        <title>Characterization of porin isoforms expressed in tumor cells.</title>
        <authorList>
            <person name="Shinohara Y."/>
            <person name="Ishida T."/>
            <person name="Hino M."/>
            <person name="Yamazaki N."/>
            <person name="Baba Y."/>
            <person name="Terada H."/>
        </authorList>
    </citation>
    <scope>NUCLEOTIDE SEQUENCE [MRNA]</scope>
    <scope>TISSUE SPECIFICITY</scope>
    <source>
        <tissue>Ascitic tumor</tissue>
    </source>
</reference>
<reference key="3">
    <citation type="submission" date="2000-05" db="EMBL/GenBank/DDBJ databases">
        <title>Ion channels in the lens.</title>
        <authorList>
            <person name="Rae J.L."/>
        </authorList>
    </citation>
    <scope>NUCLEOTIDE SEQUENCE [MRNA]</scope>
    <source>
        <strain>Sprague-Dawley</strain>
        <tissue>Lens</tissue>
    </source>
</reference>
<reference key="4">
    <citation type="journal article" date="2004" name="Genome Res.">
        <title>The status, quality, and expansion of the NIH full-length cDNA project: the Mammalian Gene Collection (MGC).</title>
        <authorList>
            <consortium name="The MGC Project Team"/>
        </authorList>
    </citation>
    <scope>NUCLEOTIDE SEQUENCE [LARGE SCALE MRNA]</scope>
    <source>
        <tissue>Brain</tissue>
        <tissue>Embryonic brain</tissue>
        <tissue>Heart</tissue>
        <tissue>Ovary</tissue>
        <tissue>Pituitary</tissue>
        <tissue>Placenta</tissue>
    </source>
</reference>
<reference key="5">
    <citation type="journal article" date="2007" name="Biochim. Biophys. Acta">
        <title>Post-translational modifications of rat liver mitochondrial outer membrane proteins identified by mass spectrometry.</title>
        <authorList>
            <person name="Distler A.M."/>
            <person name="Kerner J."/>
            <person name="Hoppel C.L."/>
        </authorList>
    </citation>
    <scope>PROTEIN SEQUENCE OF 2-14 AND 135-138</scope>
    <scope>ACETYLATION AT ALA-2</scope>
    <scope>PHOSPHORYLATION AT SER-13 AND SER-137</scope>
    <scope>IDENTIFICATION BY MASS SPECTROMETRY</scope>
    <source>
        <tissue>Liver</tissue>
    </source>
</reference>
<reference key="6">
    <citation type="submission" date="2007-07" db="UniProtKB">
        <authorList>
            <person name="Lubec G."/>
            <person name="Chen W.-Q."/>
            <person name="Afjehi-Sadat L."/>
            <person name="Kang S.U."/>
        </authorList>
    </citation>
    <scope>PROTEIN SEQUENCE OF 21-28; 33-53; 64-74; 75-93; 97-109; 121-139; 164-197; 201-218 AND 225-266</scope>
    <scope>IDENTIFICATION BY MASS SPECTROMETRY</scope>
    <source>
        <strain>Sprague-Dawley</strain>
        <tissue>Brain</tissue>
        <tissue>Hippocampus</tissue>
        <tissue>Spinal cord</tissue>
    </source>
</reference>
<reference key="7">
    <citation type="journal article" date="1979" name="Nature">
        <title>A candidate for the permeability pathway of the outer mitochondrial membrane.</title>
        <authorList>
            <person name="Colombini M."/>
        </authorList>
    </citation>
    <scope>FUNCTION</scope>
</reference>
<reference key="8">
    <citation type="journal article" date="2001" name="Biochem. J.">
        <title>Calcium binding and translocation by the voltage-dependent anion channel: a possible regulatory mechanism in mitochondrial function.</title>
        <authorList>
            <person name="Gincel D."/>
            <person name="Zaid H."/>
            <person name="Shoshan-Barmatz V."/>
        </authorList>
    </citation>
    <scope>FUNCTION</scope>
    <scope>TRANSPORTER ACTIVITY</scope>
    <scope>ACTIVITY REGULATION</scope>
</reference>
<reference key="9">
    <citation type="journal article" date="2006" name="J. Cell Biol.">
        <title>Chaperone-mediated coupling of endoplasmic reticulum and mitochondrial Ca2+ channels.</title>
        <authorList>
            <person name="Szabadkai G."/>
            <person name="Bianchi K."/>
            <person name="Varnai P."/>
            <person name="De Stefani D."/>
            <person name="Wieckowski M.R."/>
            <person name="Cavagna D."/>
            <person name="Nagy A.I."/>
            <person name="Balla T."/>
            <person name="Rizzuto R."/>
        </authorList>
    </citation>
    <scope>INTERACTION WITH HSPA9</scope>
    <scope>SUBCELLULAR LOCATION</scope>
</reference>
<reference key="10">
    <citation type="journal article" date="2012" name="Nat. Commun.">
        <title>Quantitative maps of protein phosphorylation sites across 14 different rat organs and tissues.</title>
        <authorList>
            <person name="Lundby A."/>
            <person name="Secher A."/>
            <person name="Lage K."/>
            <person name="Nordsborg N.B."/>
            <person name="Dmytriyev A."/>
            <person name="Lundby C."/>
            <person name="Olsen J.V."/>
        </authorList>
    </citation>
    <scope>PHOSPHORYLATION [LARGE SCALE ANALYSIS] AT THR-19</scope>
    <scope>IDENTIFICATION BY MASS SPECTROMETRY [LARGE SCALE ANALYSIS]</scope>
</reference>
<reference key="11">
    <citation type="journal article" date="2014" name="Front. Physiol.">
        <title>Markov chain Monte Carlo based analysis of post-translationally modified VDAC gating kinetics.</title>
        <authorList>
            <person name="Tewari S.G."/>
            <person name="Zhou Y."/>
            <person name="Otto B.J."/>
            <person name="Dash R.K."/>
            <person name="Kwok W.M."/>
            <person name="Beard D.A."/>
        </authorList>
    </citation>
    <scope>FUNCTION</scope>
    <scope>MUTAGENESIS OF SER-137</scope>
</reference>
<keyword id="KW-0007">Acetylation</keyword>
<keyword id="KW-0053">Apoptosis</keyword>
<keyword id="KW-0067">ATP-binding</keyword>
<keyword id="KW-1003">Cell membrane</keyword>
<keyword id="KW-0903">Direct protein sequencing</keyword>
<keyword id="KW-0406">Ion transport</keyword>
<keyword id="KW-1017">Isopeptide bond</keyword>
<keyword id="KW-0445">Lipid transport</keyword>
<keyword id="KW-0446">Lipid-binding</keyword>
<keyword id="KW-0472">Membrane</keyword>
<keyword id="KW-0496">Mitochondrion</keyword>
<keyword id="KW-1000">Mitochondrion outer membrane</keyword>
<keyword id="KW-0520">NAD</keyword>
<keyword id="KW-0547">Nucleotide-binding</keyword>
<keyword id="KW-0597">Phosphoprotein</keyword>
<keyword id="KW-0626">Porin</keyword>
<keyword id="KW-1185">Reference proteome</keyword>
<keyword id="KW-0812">Transmembrane</keyword>
<keyword id="KW-1134">Transmembrane beta strand</keyword>
<keyword id="KW-0813">Transport</keyword>
<keyword id="KW-0832">Ubl conjugation</keyword>
<feature type="initiator methionine" description="Removed" evidence="2">
    <location>
        <position position="1"/>
    </location>
</feature>
<feature type="chain" id="PRO_0000050503" description="Non-selective voltage-gated ion channel VDAC1">
    <location>
        <begin position="2"/>
        <end position="283"/>
    </location>
</feature>
<feature type="transmembrane region" description="Beta stranded" evidence="2">
    <location>
        <begin position="26"/>
        <end position="35"/>
    </location>
</feature>
<feature type="transmembrane region" description="Beta stranded" evidence="2">
    <location>
        <begin position="39"/>
        <end position="47"/>
    </location>
</feature>
<feature type="transmembrane region" description="Beta stranded" evidence="2">
    <location>
        <begin position="54"/>
        <end position="64"/>
    </location>
</feature>
<feature type="transmembrane region" description="Beta stranded" evidence="2">
    <location>
        <begin position="69"/>
        <end position="76"/>
    </location>
</feature>
<feature type="transmembrane region" description="Beta stranded" evidence="2">
    <location>
        <begin position="80"/>
        <end position="89"/>
    </location>
</feature>
<feature type="transmembrane region" description="Beta stranded" evidence="2">
    <location>
        <begin position="95"/>
        <end position="104"/>
    </location>
</feature>
<feature type="transmembrane region" description="Beta stranded" evidence="2">
    <location>
        <begin position="111"/>
        <end position="120"/>
    </location>
</feature>
<feature type="transmembrane region" description="Beta stranded" evidence="2">
    <location>
        <begin position="123"/>
        <end position="130"/>
    </location>
</feature>
<feature type="transmembrane region" description="Beta stranded" evidence="2">
    <location>
        <begin position="137"/>
        <end position="145"/>
    </location>
</feature>
<feature type="transmembrane region" description="Beta stranded" evidence="2">
    <location>
        <begin position="150"/>
        <end position="158"/>
    </location>
</feature>
<feature type="transmembrane region" description="Beta stranded" evidence="2">
    <location>
        <begin position="163"/>
        <end position="175"/>
    </location>
</feature>
<feature type="transmembrane region" description="Beta stranded" evidence="2">
    <location>
        <begin position="178"/>
        <end position="185"/>
    </location>
</feature>
<feature type="transmembrane region" description="Beta stranded" evidence="2">
    <location>
        <begin position="189"/>
        <end position="198"/>
    </location>
</feature>
<feature type="transmembrane region" description="Beta stranded" evidence="2">
    <location>
        <begin position="202"/>
        <end position="211"/>
    </location>
</feature>
<feature type="transmembrane region" description="Beta stranded" evidence="2">
    <location>
        <begin position="218"/>
        <end position="227"/>
    </location>
</feature>
<feature type="transmembrane region" description="Beta stranded" evidence="2">
    <location>
        <begin position="231"/>
        <end position="238"/>
    </location>
</feature>
<feature type="transmembrane region" description="Beta stranded" evidence="2">
    <location>
        <begin position="242"/>
        <end position="251"/>
    </location>
</feature>
<feature type="transmembrane region" description="Beta stranded" evidence="2">
    <location>
        <begin position="254"/>
        <end position="263"/>
    </location>
</feature>
<feature type="transmembrane region" description="Beta stranded" evidence="2">
    <location>
        <begin position="273"/>
        <end position="282"/>
    </location>
</feature>
<feature type="binding site" evidence="4">
    <location>
        <position position="12"/>
    </location>
    <ligand>
        <name>ATP</name>
        <dbReference type="ChEBI" id="CHEBI:30616"/>
    </ligand>
</feature>
<feature type="binding site" evidence="4">
    <location>
        <position position="20"/>
    </location>
    <ligand>
        <name>ATP</name>
        <dbReference type="ChEBI" id="CHEBI:30616"/>
    </ligand>
</feature>
<feature type="binding site" evidence="2">
    <location>
        <begin position="242"/>
        <end position="244"/>
    </location>
    <ligand>
        <name>NAD(+)</name>
        <dbReference type="ChEBI" id="CHEBI:57540"/>
    </ligand>
</feature>
<feature type="binding site" evidence="2">
    <location>
        <begin position="260"/>
        <end position="264"/>
    </location>
    <ligand>
        <name>NAD(+)</name>
        <dbReference type="ChEBI" id="CHEBI:57540"/>
    </ligand>
</feature>
<feature type="site" description="Involved in ceramide and phosphatidylcholine binding. Critical for channel structural stability and gating" evidence="2">
    <location>
        <position position="73"/>
    </location>
</feature>
<feature type="modified residue" description="N-acetylalanine" evidence="8">
    <location>
        <position position="2"/>
    </location>
</feature>
<feature type="modified residue" description="Phosphoserine" evidence="8">
    <location>
        <position position="13"/>
    </location>
</feature>
<feature type="modified residue" description="Phosphothreonine" evidence="14">
    <location>
        <position position="19"/>
    </location>
</feature>
<feature type="modified residue" description="N6-acetyllysine; alternate" evidence="2">
    <location>
        <position position="20"/>
    </location>
</feature>
<feature type="modified residue" description="N6-succinyllysine; alternate" evidence="4">
    <location>
        <position position="20"/>
    </location>
</feature>
<feature type="modified residue" description="Phosphotyrosine" evidence="4">
    <location>
        <position position="67"/>
    </location>
</feature>
<feature type="modified residue" description="Phosphothreonine" evidence="2">
    <location>
        <position position="107"/>
    </location>
</feature>
<feature type="modified residue" description="N6-acetyllysine; alternate" evidence="4">
    <location>
        <position position="109"/>
    </location>
</feature>
<feature type="modified residue" description="Phosphoserine" evidence="8">
    <location>
        <position position="137"/>
    </location>
</feature>
<feature type="modified residue" description="Phosphoserine; by NEK1" evidence="2">
    <location>
        <position position="193"/>
    </location>
</feature>
<feature type="modified residue" description="Phosphoserine" evidence="2">
    <location>
        <position position="240"/>
    </location>
</feature>
<feature type="modified residue" description="N6-acetyllysine" evidence="4">
    <location>
        <position position="252"/>
    </location>
</feature>
<feature type="modified residue" description="N6-acetyllysine; alternate" evidence="2">
    <location>
        <position position="266"/>
    </location>
</feature>
<feature type="cross-link" description="Glycyl lysine isopeptide (Lys-Gly) (interchain with G-Cter in ubiquitin)" evidence="2">
    <location>
        <position position="12"/>
    </location>
</feature>
<feature type="cross-link" description="Glycyl lysine isopeptide (Lys-Gly) (interchain with G-Cter in ubiquitin); alternate" evidence="3">
    <location>
        <position position="20"/>
    </location>
</feature>
<feature type="cross-link" description="Glycyl lysine isopeptide (Lys-Gly) (interchain with G-Cter in ubiquitin)" evidence="2">
    <location>
        <position position="53"/>
    </location>
</feature>
<feature type="cross-link" description="Glycyl lysine isopeptide (Lys-Gly) (interchain with G-Cter in ubiquitin)" evidence="2">
    <location>
        <position position="61"/>
    </location>
</feature>
<feature type="cross-link" description="Glycyl lysine isopeptide (Lys-Gly) (interchain with G-Cter in ubiquitin); alternate" evidence="2">
    <location>
        <position position="109"/>
    </location>
</feature>
<feature type="cross-link" description="Glycyl lysine isopeptide (Lys-Gly) (interchain with G-Cter in ubiquitin)" evidence="2">
    <location>
        <position position="110"/>
    </location>
</feature>
<feature type="cross-link" description="Glycyl lysine isopeptide (Lys-Gly) (interchain with G-Cter in ubiquitin)" evidence="2">
    <location>
        <position position="161"/>
    </location>
</feature>
<feature type="cross-link" description="Glycyl lysine isopeptide (Lys-Gly) (interchain with G-Cter in ubiquitin); alternate" evidence="2">
    <location>
        <position position="266"/>
    </location>
</feature>
<feature type="cross-link" description="Glycyl lysine isopeptide (Lys-Gly) (interchain with G-Cter in ubiquitin)" evidence="2">
    <location>
        <position position="274"/>
    </location>
</feature>
<feature type="mutagenesis site" description="Channel conformation is shifted toward the open state." evidence="9">
    <original>S</original>
    <variation>E</variation>
    <location>
        <position position="137"/>
    </location>
</feature>
<feature type="sequence conflict" description="In Ref. 1; AAD02476." evidence="11" ref="1">
    <original>N</original>
    <variation>T</variation>
    <location>
        <position position="55"/>
    </location>
</feature>
<feature type="sequence conflict" description="In Ref. 1; AAD02476." evidence="11" ref="1">
    <original>T</original>
    <variation>S</variation>
    <location>
        <position position="83"/>
    </location>
</feature>
<feature type="sequence conflict" description="In Ref. 1; AAD02476." evidence="11" ref="1">
    <original>V</original>
    <variation>M</variation>
    <location>
        <position position="129"/>
    </location>
</feature>
<feature type="sequence conflict" description="In Ref. 1; AAD02476." evidence="11" ref="1">
    <original>G</original>
    <variation>GFDIAGPSIRGALVLGYEG</variation>
    <location>
        <position position="148"/>
    </location>
</feature>
<comment type="function">
    <text evidence="2 4 6 9 10">Non-selective voltage-gated ion channel that mediates the transport of anions and cations through the mitochondrion outer membrane and plasma membrane (PubMed:11485562). The channel at the outer mitochondrial membrane allows diffusion of small hydrophilic molecules; in the plasma membrane it is involved in cell volume regulation and apoptosis (By similarity). It adopts an open conformation at low or zero membrane potential and a closed conformation at potentials above 30-40 mV (PubMed:450112). The open state has a weak anion selectivity whereas the closed state is cation-selective (PubMed:25628567). Binds various signaling molecules, including the sphingolipid ceramide, the phospholipid phosphatidylcholine, and the sterols cholesterol and oxysterol. In depolarized mitochondria, acts downstream of PRKN and PINK1 to promote mitophagy or prevent apoptosis; polyubiquitination by PRKN promotes mitophagy, while monoubiquitination by PRKN decreases mitochondrial calcium influx which ultimately inhibits apoptosis. May participate in the formation of the permeability transition pore complex (PTPC) responsible for the release of mitochondrial products that triggers apoptosis. May mediate ATP export from cells (By similarity). Part of a complex composed of HSPA9, ITPR1 and VDAC1 that regulates mitochondrial calcium-dependent apoptosis by facilitating calcium transport from the ER lumen to the mitochondria intermembrane space thus providing calcium for the downstream calcium channel MCU that directly releases it into mitochondria matrix (By similarity).</text>
</comment>
<comment type="function">
    <text evidence="2">Catalyzes the scrambling of phospholipids across the outer mitochondrial membrane; the mechanism is unrelated to channel activity and is capable of translocating both anionic and zwitterionic phospholipids.</text>
</comment>
<comment type="catalytic activity">
    <reaction evidence="6">
        <text>Ca(2+)(in) = Ca(2+)(out)</text>
        <dbReference type="Rhea" id="RHEA:29671"/>
        <dbReference type="ChEBI" id="CHEBI:29108"/>
    </reaction>
</comment>
<comment type="catalytic activity">
    <reaction evidence="6">
        <text>Na(+)(in) = Na(+)(out)</text>
        <dbReference type="Rhea" id="RHEA:34963"/>
        <dbReference type="ChEBI" id="CHEBI:29101"/>
    </reaction>
</comment>
<comment type="catalytic activity">
    <reaction evidence="6">
        <text>chloride(in) = chloride(out)</text>
        <dbReference type="Rhea" id="RHEA:29823"/>
        <dbReference type="ChEBI" id="CHEBI:17996"/>
    </reaction>
</comment>
<comment type="catalytic activity">
    <reaction evidence="12">
        <text>Mg(2+)(in) = Mg(2+)(out)</text>
        <dbReference type="Rhea" id="RHEA:29827"/>
        <dbReference type="ChEBI" id="CHEBI:18420"/>
    </reaction>
</comment>
<comment type="catalytic activity">
    <reaction evidence="2">
        <text>K(+)(in) = K(+)(out)</text>
        <dbReference type="Rhea" id="RHEA:29463"/>
        <dbReference type="ChEBI" id="CHEBI:29103"/>
    </reaction>
</comment>
<comment type="catalytic activity">
    <reaction evidence="2">
        <text>ATP(in) = ATP(out)</text>
        <dbReference type="Rhea" id="RHEA:75687"/>
        <dbReference type="ChEBI" id="CHEBI:30616"/>
    </reaction>
</comment>
<comment type="catalytic activity">
    <reaction evidence="1">
        <text>L-glutamate(out) = L-glutamate(in)</text>
        <dbReference type="Rhea" id="RHEA:66336"/>
        <dbReference type="ChEBI" id="CHEBI:29985"/>
    </reaction>
</comment>
<comment type="catalytic activity">
    <reaction evidence="1">
        <text>dopamine(out) = dopamine(in)</text>
        <dbReference type="Rhea" id="RHEA:73863"/>
        <dbReference type="ChEBI" id="CHEBI:59905"/>
    </reaction>
</comment>
<comment type="catalytic activity">
    <reaction evidence="1">
        <text>acetylcholine(in) = acetylcholine(out)</text>
        <dbReference type="Rhea" id="RHEA:74663"/>
        <dbReference type="ChEBI" id="CHEBI:15355"/>
    </reaction>
</comment>
<comment type="catalytic activity">
    <reaction evidence="2">
        <text>Fe(III)-[cytochrome c](out) = Fe(III)-[cytochrome c](in)</text>
        <dbReference type="Rhea" id="RHEA:79311"/>
        <dbReference type="Rhea" id="RHEA-COMP:14399"/>
        <dbReference type="ChEBI" id="CHEBI:29034"/>
    </reaction>
</comment>
<comment type="catalytic activity">
    <reaction evidence="2">
        <text>a 1,2-diacyl-sn-glycero-3-phosphocholine(in) = a 1,2-diacyl-sn-glycero-3-phosphocholine(out)</text>
        <dbReference type="Rhea" id="RHEA:38571"/>
        <dbReference type="ChEBI" id="CHEBI:57643"/>
    </reaction>
</comment>
<comment type="catalytic activity">
    <reaction evidence="2">
        <text>a 1,2-diacyl-sn-glycero-3-phospho-L-serine(in) = a 1,2-diacyl-sn-glycero-3-phospho-L-serine(out)</text>
        <dbReference type="Rhea" id="RHEA:38663"/>
        <dbReference type="ChEBI" id="CHEBI:57262"/>
    </reaction>
</comment>
<comment type="activity regulation">
    <text evidence="2 6">Inhibited by nitric oxide. Voltage-gated ion channel activity is inhibited by lanthanum(3+) and ruthenium red (PubMed:11485562). Mitochondrial calcium transport is inhibited by lanthanum(3+), ruthenium red and Ru360 (PubMed:11485562).</text>
</comment>
<comment type="subunit">
    <text evidence="2 7">Homodimer and homotrimer; in response to cyclic AMP or calcium; oligomerization is required for scramblase activity. Component of the mitochondrial permeability transition pore complex (mPTPC), at least composed of SPG7, VDAC1 and PPIF. Interacts with SPG7, NIPSNAP2 and SLC25A30. Interacts with hexokinases including HK1. The HK1-VDAC1 complex interacts with ATF2. Interacts with BCL2L1. Interacts with BAK1. Interacts with RTL10/BOP (via BH3 domain). Interacts with amyloid-beta and APP; induces VDAC1 dephosphorylation. Interacts with TMEM41B. Interacts with BCAP31. Interacts with HSPA9; this interaction couples ITPR1 to VDAC1 (PubMed:17178908).</text>
</comment>
<comment type="subcellular location">
    <subcellularLocation>
        <location evidence="2 7">Mitochondrion outer membrane</location>
        <topology evidence="2">Multi-pass membrane protein</topology>
    </subcellularLocation>
    <subcellularLocation>
        <location evidence="2">Cell membrane</location>
        <topology evidence="2">Multi-pass membrane protein</topology>
    </subcellularLocation>
    <subcellularLocation>
        <location evidence="2">Membrane raft</location>
        <topology evidence="2">Multi-pass membrane protein</topology>
    </subcellularLocation>
    <text evidence="7">Found in a complex with HSPA9 and VDAC1 at the endoplasmic reticulum-mitochondria contact sites.</text>
</comment>
<comment type="tissue specificity">
    <text evidence="5">Widely expressed. High levels in heart and kidney with lower levels in brain and ascitic tumor. Very low levels in liver.</text>
</comment>
<comment type="domain">
    <text evidence="2">Consists mainly of a membrane-spanning beta-barrel formed by 19 beta-strands. The helical N-terminus folds back into the pore opening and plays a role in voltage-gated channel activity.</text>
</comment>
<comment type="PTM">
    <text evidence="2">Phosphorylation at Ser-193 by NEK1 promotes the closed conformational state preventing excessive mitochondrial membrane permeability and subsequent apoptotic cell death after injury. Phosphorylation by the AKT-GSK3B axis stabilizes the protein probably by preventing ubiquitin-mediated proteasomal degradation.</text>
</comment>
<comment type="PTM">
    <text evidence="2">Ubiquitinated. Undergoes monoubiquitination and polyubiquitination by PRKN; monoubiquitination at Lys-274 inhibits apoptosis, whereas polyubiquitination leads to its degradation and promotes mitophagy. Deubiquitinated by USP30.</text>
</comment>
<comment type="similarity">
    <text evidence="11">Belongs to the eukaryotic mitochondrial porin family.</text>
</comment>
<comment type="sequence caution" evidence="11">
    <conflict type="erroneous initiation">
        <sequence resource="EMBL-CDS" id="AAH60558"/>
    </conflict>
    <text>Extended N-terminus.</text>
</comment>
<gene>
    <name evidence="13" type="primary">Vdac1</name>
    <name type="synonym">VDAC</name>
</gene>
<accession>Q9Z2L0</accession>
<accession>A1L125</accession>
<accession>Q3MHT8</accession>
<accession>Q5M944</accession>
<accession>Q5M972</accession>
<accession>Q6IN28</accession>
<accession>Q6P9W9</accession>
<proteinExistence type="evidence at protein level"/>
<organism>
    <name type="scientific">Rattus norvegicus</name>
    <name type="common">Rat</name>
    <dbReference type="NCBI Taxonomy" id="10116"/>
    <lineage>
        <taxon>Eukaryota</taxon>
        <taxon>Metazoa</taxon>
        <taxon>Chordata</taxon>
        <taxon>Craniata</taxon>
        <taxon>Vertebrata</taxon>
        <taxon>Euteleostomi</taxon>
        <taxon>Mammalia</taxon>
        <taxon>Eutheria</taxon>
        <taxon>Euarchontoglires</taxon>
        <taxon>Glires</taxon>
        <taxon>Rodentia</taxon>
        <taxon>Myomorpha</taxon>
        <taxon>Muroidea</taxon>
        <taxon>Muridae</taxon>
        <taxon>Murinae</taxon>
        <taxon>Rattus</taxon>
    </lineage>
</organism>